<evidence type="ECO:0000255" key="1">
    <source>
        <dbReference type="HAMAP-Rule" id="MF_01164"/>
    </source>
</evidence>
<dbReference type="EC" id="2.4.2.53" evidence="1"/>
<dbReference type="EMBL" id="CP001396">
    <property type="protein sequence ID" value="ACR65754.1"/>
    <property type="molecule type" value="Genomic_DNA"/>
</dbReference>
<dbReference type="RefSeq" id="WP_000461657.1">
    <property type="nucleotide sequence ID" value="NC_012759.1"/>
</dbReference>
<dbReference type="SMR" id="C4ZU96"/>
<dbReference type="CAZy" id="GT2">
    <property type="family name" value="Glycosyltransferase Family 2"/>
</dbReference>
<dbReference type="GeneID" id="93774920"/>
<dbReference type="KEGG" id="ebw:BWG_2027"/>
<dbReference type="HOGENOM" id="CLU_033536_0_0_6"/>
<dbReference type="UniPathway" id="UPA00030"/>
<dbReference type="UniPathway" id="UPA00036">
    <property type="reaction ID" value="UER00495"/>
</dbReference>
<dbReference type="GO" id="GO:0005886">
    <property type="term" value="C:plasma membrane"/>
    <property type="evidence" value="ECO:0007669"/>
    <property type="project" value="UniProtKB-SubCell"/>
</dbReference>
<dbReference type="GO" id="GO:0016780">
    <property type="term" value="F:phosphotransferase activity, for other substituted phosphate groups"/>
    <property type="evidence" value="ECO:0007669"/>
    <property type="project" value="UniProtKB-UniRule"/>
</dbReference>
<dbReference type="GO" id="GO:0099621">
    <property type="term" value="F:undecaprenyl-phosphate 4-deoxy-4-formamido-L-arabinose transferase activity"/>
    <property type="evidence" value="ECO:0007669"/>
    <property type="project" value="UniProtKB-EC"/>
</dbReference>
<dbReference type="GO" id="GO:0036108">
    <property type="term" value="P:4-amino-4-deoxy-alpha-L-arabinopyranosyl undecaprenyl phosphate biosynthetic process"/>
    <property type="evidence" value="ECO:0007669"/>
    <property type="project" value="UniProtKB-UniRule"/>
</dbReference>
<dbReference type="GO" id="GO:0009245">
    <property type="term" value="P:lipid A biosynthetic process"/>
    <property type="evidence" value="ECO:0007669"/>
    <property type="project" value="UniProtKB-UniRule"/>
</dbReference>
<dbReference type="GO" id="GO:0009103">
    <property type="term" value="P:lipopolysaccharide biosynthetic process"/>
    <property type="evidence" value="ECO:0007669"/>
    <property type="project" value="UniProtKB-UniRule"/>
</dbReference>
<dbReference type="GO" id="GO:0046677">
    <property type="term" value="P:response to antibiotic"/>
    <property type="evidence" value="ECO:0007669"/>
    <property type="project" value="UniProtKB-KW"/>
</dbReference>
<dbReference type="CDD" id="cd04187">
    <property type="entry name" value="DPM1_like_bac"/>
    <property type="match status" value="1"/>
</dbReference>
<dbReference type="FunFam" id="3.90.550.10:FF:000019">
    <property type="entry name" value="Undecaprenyl-phosphate 4-deoxy-4-formamido-L-arabinose transferase"/>
    <property type="match status" value="1"/>
</dbReference>
<dbReference type="Gene3D" id="3.90.550.10">
    <property type="entry name" value="Spore Coat Polysaccharide Biosynthesis Protein SpsA, Chain A"/>
    <property type="match status" value="1"/>
</dbReference>
<dbReference type="HAMAP" id="MF_01164">
    <property type="entry name" value="ArnC_transfer"/>
    <property type="match status" value="1"/>
</dbReference>
<dbReference type="InterPro" id="IPR022857">
    <property type="entry name" value="ArnC_tfrase"/>
</dbReference>
<dbReference type="InterPro" id="IPR001173">
    <property type="entry name" value="Glyco_trans_2-like"/>
</dbReference>
<dbReference type="InterPro" id="IPR050256">
    <property type="entry name" value="Glycosyltransferase_2"/>
</dbReference>
<dbReference type="InterPro" id="IPR029044">
    <property type="entry name" value="Nucleotide-diphossugar_trans"/>
</dbReference>
<dbReference type="NCBIfam" id="NF007986">
    <property type="entry name" value="PRK10714.1"/>
    <property type="match status" value="1"/>
</dbReference>
<dbReference type="PANTHER" id="PTHR48090:SF3">
    <property type="entry name" value="UNDECAPRENYL-PHOSPHATE 4-DEOXY-4-FORMAMIDO-L-ARABINOSE TRANSFERASE"/>
    <property type="match status" value="1"/>
</dbReference>
<dbReference type="PANTHER" id="PTHR48090">
    <property type="entry name" value="UNDECAPRENYL-PHOSPHATE 4-DEOXY-4-FORMAMIDO-L-ARABINOSE TRANSFERASE-RELATED"/>
    <property type="match status" value="1"/>
</dbReference>
<dbReference type="Pfam" id="PF00535">
    <property type="entry name" value="Glycos_transf_2"/>
    <property type="match status" value="1"/>
</dbReference>
<dbReference type="SUPFAM" id="SSF53448">
    <property type="entry name" value="Nucleotide-diphospho-sugar transferases"/>
    <property type="match status" value="1"/>
</dbReference>
<proteinExistence type="inferred from homology"/>
<gene>
    <name evidence="1" type="primary">arnC</name>
    <name type="ordered locus">BWG_2027</name>
</gene>
<protein>
    <recommendedName>
        <fullName evidence="1">Undecaprenyl-phosphate 4-deoxy-4-formamido-L-arabinose transferase</fullName>
        <ecNumber evidence="1">2.4.2.53</ecNumber>
    </recommendedName>
    <alternativeName>
        <fullName evidence="1">Undecaprenyl-phosphate Ara4FN transferase</fullName>
        <shortName evidence="1">Ara4FN transferase</shortName>
    </alternativeName>
</protein>
<sequence length="322" mass="36339">MFEIHPVKKVSVVIPVYNEQESLPELIRRTTTACESLGKEYEILLIDDGSSDNSAHMLVEASQAENSHIVSILLNRNYGQHSAIMAGFSHVTGDLIITLDADLQNPPEEIPRLVAKADEGYDVVGTVRQNRQDSWFRKTASKMINRLIQRTTGKAMGDYGCMLRAYRRHIVDAMLHCHERSTFIPILANIFARRAIEIPVHHAEREFGESKYSFMRLINLMYDLVTCLTTTPLRMLSLLGSIIAIGGFSIAVLLVILRLTFGPQWAAEGVFMLFAVLFTFIGAQFIGMGLLGEYIGRIYTDVRARPRYFVQQVIRPSSKENE</sequence>
<feature type="chain" id="PRO_1000213724" description="Undecaprenyl-phosphate 4-deoxy-4-formamido-L-arabinose transferase">
    <location>
        <begin position="1"/>
        <end position="322"/>
    </location>
</feature>
<feature type="topological domain" description="Cytoplasmic" evidence="1">
    <location>
        <begin position="1"/>
        <end position="235"/>
    </location>
</feature>
<feature type="transmembrane region" description="Helical" evidence="1">
    <location>
        <begin position="236"/>
        <end position="256"/>
    </location>
</feature>
<feature type="topological domain" description="Periplasmic" evidence="1">
    <location>
        <begin position="257"/>
        <end position="269"/>
    </location>
</feature>
<feature type="transmembrane region" description="Helical" evidence="1">
    <location>
        <begin position="270"/>
        <end position="290"/>
    </location>
</feature>
<feature type="topological domain" description="Cytoplasmic" evidence="1">
    <location>
        <begin position="291"/>
        <end position="322"/>
    </location>
</feature>
<comment type="function">
    <text evidence="1">Catalyzes the transfer of 4-deoxy-4-formamido-L-arabinose from UDP to undecaprenyl phosphate. The modified arabinose is attached to lipid A and is required for resistance to polymyxin and cationic antimicrobial peptides.</text>
</comment>
<comment type="catalytic activity">
    <reaction evidence="1">
        <text>UDP-4-deoxy-4-formamido-beta-L-arabinose + di-trans,octa-cis-undecaprenyl phosphate = 4-deoxy-4-formamido-alpha-L-arabinopyranosyl di-trans,octa-cis-undecaprenyl phosphate + UDP</text>
        <dbReference type="Rhea" id="RHEA:27722"/>
        <dbReference type="ChEBI" id="CHEBI:58223"/>
        <dbReference type="ChEBI" id="CHEBI:58709"/>
        <dbReference type="ChEBI" id="CHEBI:58909"/>
        <dbReference type="ChEBI" id="CHEBI:60392"/>
        <dbReference type="EC" id="2.4.2.53"/>
    </reaction>
</comment>
<comment type="pathway">
    <text evidence="1">Glycolipid biosynthesis; 4-amino-4-deoxy-alpha-L-arabinose undecaprenyl phosphate biosynthesis; 4-amino-4-deoxy-alpha-L-arabinose undecaprenyl phosphate from UDP-4-deoxy-4-formamido-beta-L-arabinose and undecaprenyl phosphate: step 1/2.</text>
</comment>
<comment type="pathway">
    <text evidence="1">Bacterial outer membrane biogenesis; lipopolysaccharide biosynthesis.</text>
</comment>
<comment type="subcellular location">
    <subcellularLocation>
        <location evidence="1">Cell inner membrane</location>
        <topology evidence="1">Multi-pass membrane protein</topology>
    </subcellularLocation>
</comment>
<comment type="similarity">
    <text evidence="1">Belongs to the glycosyltransferase 2 family.</text>
</comment>
<name>ARNC_ECOBW</name>
<organism>
    <name type="scientific">Escherichia coli (strain K12 / MC4100 / BW2952)</name>
    <dbReference type="NCBI Taxonomy" id="595496"/>
    <lineage>
        <taxon>Bacteria</taxon>
        <taxon>Pseudomonadati</taxon>
        <taxon>Pseudomonadota</taxon>
        <taxon>Gammaproteobacteria</taxon>
        <taxon>Enterobacterales</taxon>
        <taxon>Enterobacteriaceae</taxon>
        <taxon>Escherichia</taxon>
    </lineage>
</organism>
<reference key="1">
    <citation type="journal article" date="2009" name="J. Bacteriol.">
        <title>Genomic sequencing reveals regulatory mutations and recombinational events in the widely used MC4100 lineage of Escherichia coli K-12.</title>
        <authorList>
            <person name="Ferenci T."/>
            <person name="Zhou Z."/>
            <person name="Betteridge T."/>
            <person name="Ren Y."/>
            <person name="Liu Y."/>
            <person name="Feng L."/>
            <person name="Reeves P.R."/>
            <person name="Wang L."/>
        </authorList>
    </citation>
    <scope>NUCLEOTIDE SEQUENCE [LARGE SCALE GENOMIC DNA]</scope>
    <source>
        <strain>K12 / MC4100 / BW2952</strain>
    </source>
</reference>
<keyword id="KW-0046">Antibiotic resistance</keyword>
<keyword id="KW-0997">Cell inner membrane</keyword>
<keyword id="KW-1003">Cell membrane</keyword>
<keyword id="KW-0328">Glycosyltransferase</keyword>
<keyword id="KW-0441">Lipid A biosynthesis</keyword>
<keyword id="KW-0444">Lipid biosynthesis</keyword>
<keyword id="KW-0443">Lipid metabolism</keyword>
<keyword id="KW-0448">Lipopolysaccharide biosynthesis</keyword>
<keyword id="KW-0472">Membrane</keyword>
<keyword id="KW-0808">Transferase</keyword>
<keyword id="KW-0812">Transmembrane</keyword>
<keyword id="KW-1133">Transmembrane helix</keyword>
<accession>C4ZU96</accession>